<feature type="chain" id="PRO_0000267714" description="Protein bicaudal C homolog 1">
    <location>
        <begin position="1"/>
        <end position="974"/>
    </location>
</feature>
<feature type="domain" description="KH 1" evidence="3">
    <location>
        <begin position="132"/>
        <end position="199"/>
    </location>
</feature>
<feature type="domain" description="KH 2" evidence="3">
    <location>
        <begin position="284"/>
        <end position="348"/>
    </location>
</feature>
<feature type="domain" description="SAM" evidence="4">
    <location>
        <begin position="873"/>
        <end position="936"/>
    </location>
</feature>
<feature type="region of interest" description="Disordered" evidence="5">
    <location>
        <begin position="1"/>
        <end position="50"/>
    </location>
</feature>
<feature type="region of interest" description="Disordered" evidence="5">
    <location>
        <begin position="593"/>
        <end position="644"/>
    </location>
</feature>
<feature type="region of interest" description="Disordered" evidence="5">
    <location>
        <begin position="665"/>
        <end position="719"/>
    </location>
</feature>
<feature type="region of interest" description="Disordered" evidence="5">
    <location>
        <begin position="783"/>
        <end position="846"/>
    </location>
</feature>
<feature type="compositionally biased region" description="Polar residues" evidence="5">
    <location>
        <begin position="602"/>
        <end position="619"/>
    </location>
</feature>
<feature type="compositionally biased region" description="Basic and acidic residues" evidence="5">
    <location>
        <begin position="690"/>
        <end position="703"/>
    </location>
</feature>
<feature type="modified residue" description="Phosphoserine" evidence="2">
    <location>
        <position position="26"/>
    </location>
</feature>
<feature type="modified residue" description="Phosphoserine" evidence="2">
    <location>
        <position position="31"/>
    </location>
</feature>
<feature type="modified residue" description="Phosphoserine" evidence="2">
    <location>
        <position position="43"/>
    </location>
</feature>
<feature type="modified residue" description="N6-acetyllysine" evidence="10">
    <location>
        <position position="398"/>
    </location>
</feature>
<feature type="modified residue" description="Phosphoserine" evidence="11">
    <location>
        <position position="576"/>
    </location>
</feature>
<feature type="modified residue" description="Phosphoserine" evidence="2">
    <location>
        <position position="612"/>
    </location>
</feature>
<feature type="modified residue" description="Phosphoserine" evidence="2">
    <location>
        <position position="679"/>
    </location>
</feature>
<feature type="splice variant" id="VSP_021949" description="In isoform 2." evidence="8">
    <original>TEHYLSSSNYMDCISSLTGSNGCNLNSSFKGSDLPELFSKLGLGKYTDVFQQQEIDLQTFLTLTDQDLKELGITTFGARRKMLLAISELNKNRRKLFESPNARTSFLEGGASGRLPRQYHSDIASVSGRW</original>
    <variation>SELCVLCTLLGIPRLECVYLGWSITDCGLSDFKCLV</variation>
    <location>
        <begin position="845"/>
        <end position="974"/>
    </location>
</feature>
<feature type="sequence variant" id="VAR_029658" description="In dbSNP:rs7905025.">
    <original>G</original>
    <variation>D</variation>
    <location>
        <position position="8"/>
    </location>
</feature>
<feature type="sequence variant" id="VAR_072077" description="Found in a family with atypical autism and severe epilepsy; uncertain significance; dbSNP:rs753582128." evidence="7">
    <original>M</original>
    <variation>V</variation>
    <location>
        <position position="270"/>
    </location>
</feature>
<feature type="sequence variant" id="VAR_066759" description="In dbSNP:rs138916713." evidence="6">
    <original>N</original>
    <variation>T</variation>
    <location>
        <position position="711"/>
    </location>
</feature>
<feature type="sequence variant" id="VAR_066760" description="In CYSRD; may impair splicing; hypomorphic mutation; dbSNP:rs387907124." evidence="6">
    <original>E</original>
    <variation>G</variation>
    <location>
        <position position="932"/>
    </location>
</feature>
<feature type="sequence variant" id="VAR_033542" description="In dbSNP:rs4948550.">
    <original>S</original>
    <variation>P</variation>
    <location>
        <position position="943"/>
    </location>
</feature>
<feature type="sequence variant" id="VAR_060133" description="In dbSNP:rs7895817.">
    <original>N</original>
    <variation>S</variation>
    <location>
        <position position="945"/>
    </location>
</feature>
<feature type="strand" evidence="13">
    <location>
        <begin position="47"/>
        <end position="52"/>
    </location>
</feature>
<feature type="helix" evidence="13">
    <location>
        <begin position="55"/>
        <end position="67"/>
    </location>
</feature>
<feature type="helix" evidence="13">
    <location>
        <begin position="76"/>
        <end position="84"/>
    </location>
</feature>
<feature type="strand" evidence="13">
    <location>
        <begin position="87"/>
        <end position="89"/>
    </location>
</feature>
<feature type="helix" evidence="13">
    <location>
        <begin position="93"/>
        <end position="97"/>
    </location>
</feature>
<feature type="strand" evidence="13">
    <location>
        <begin position="105"/>
        <end position="111"/>
    </location>
</feature>
<feature type="helix" evidence="13">
    <location>
        <begin position="112"/>
        <end position="125"/>
    </location>
</feature>
<feature type="helix" evidence="12">
    <location>
        <begin position="875"/>
        <end position="877"/>
    </location>
</feature>
<feature type="helix" evidence="12">
    <location>
        <begin position="878"/>
        <end position="884"/>
    </location>
</feature>
<feature type="helix" evidence="12">
    <location>
        <begin position="888"/>
        <end position="890"/>
    </location>
</feature>
<feature type="helix" evidence="12">
    <location>
        <begin position="891"/>
        <end position="896"/>
    </location>
</feature>
<feature type="helix" evidence="12">
    <location>
        <begin position="901"/>
        <end position="904"/>
    </location>
</feature>
<feature type="helix" evidence="12">
    <location>
        <begin position="909"/>
        <end position="915"/>
    </location>
</feature>
<feature type="helix" evidence="12">
    <location>
        <begin position="920"/>
        <end position="935"/>
    </location>
</feature>
<sequence>MAAQGEPGYLAAQSDPGSNSERSTDSPVPGSEDDLVAGATLHSPEWSEERFRVDRKKLEAMLQAAAEGKGRSGEDFFQKIMEETNTQIAWPSKLKIGAKSKKDPHIKVSGKKEDVKEAKEMIMSVLDTKSNRVTLKMDVSHTEHSHVIGKGGNNIKKVMEETGCHIHFPDSNRNNQAEKSNQVSIAGQPAGVESARVRIRELLPLVLMFELPIAGILQPVPDPNSPSIQHISQTYNISVSFKQRSRMYGATVIVRGSQNNTSAVKEGTAMLLEHLAGSLASAIPVSTQLDIAAQHHLFMMGRNGSNIKHIMQRTGAQIHFPDPSNPQKKSTVYLQGTIESVCLARQYLMGCLPLVLMFDMKEEIEVDPQFIAQLMEQLDVFISIKPKPKQPSKSVIVKSVERNALNMYEARKCLLGLESSGVTIATSPSPASCPAGLACPSLDILASAGLGLTGLGLLGPTTLSLNTSTTPNSLLNALNSSVSPLQSPSSGTPSPTLWAPPLANTSSATGFSAIPHLMIPSTAQATLTNILLSGVPTYGHTAPSPPPGLTPVDVHINSMQTEGKKISAALNGHAQSPDIKYGAISTSSLGEKVLSANHGDPSIQTSGSEQTSPKSSPTEGCNDAFVEVGMPRSPSHSGNAGDLKQMMCPSKVSCAKRQTVELLQGTKNSHLHSTDRLLSDPELSATESPLADKKAPGSERAAERAAAAQQNSERAHLAPRSSYVNMQAFDYEQKKLLATKAMLKKPVVTEVRTPTNTWSGLGFSKSMPAETIKELRRANHVSYKPTMTTTYEGSSMSLSRSNSREHLGGGSESDNWRDRNGIGPGSHSEFAASIGSPKRKQNKSTEHYLSSSNYMDCISSLTGSNGCNLNSSFKGSDLPELFSKLGLGKYTDVFQQQEIDLQTFLTLTDQDLKELGITTFGARRKMLLAISELNKNRRKLFESPNARTSFLEGGASGRLPRQYHSDIASVSGRW</sequence>
<comment type="function">
    <text evidence="6">Putative RNA-binding protein. Acts as a negative regulator of Wnt signaling. May be involved in regulating gene expression during embryonic development.</text>
</comment>
<comment type="subunit">
    <text evidence="2">Interacts (via KH domains) with ANKS6 (via SAM domain) in an RNA-dependent manner (By similarity). Interacts with ANKS3 (By similarity).</text>
</comment>
<comment type="subcellular location">
    <subcellularLocation>
        <location evidence="1">Cytoplasm</location>
    </subcellularLocation>
</comment>
<comment type="alternative products">
    <event type="alternative splicing"/>
    <isoform>
        <id>Q9H694-1</id>
        <name>1</name>
        <sequence type="displayed"/>
    </isoform>
    <isoform>
        <id>Q9H694-2</id>
        <name>2</name>
        <sequence type="described" ref="VSP_021949"/>
    </isoform>
</comment>
<comment type="disease" evidence="6">
    <disease id="DI-03361">
        <name>Renal dysplasia, cystic</name>
        <acronym>CYSRD</acronym>
        <description>An anomaly of the kidney characterized by numerous renal cysts and apparent disorder of differentiation of the renal parenchyma. Kidney of affected individuals lack the normal renal bean shape, and the collection drainage system. The cystic, dysplastic kidney contains undifferentiated mesenchyme, cartilaginous tissue, and immature collecting ducts.</description>
        <dbReference type="MIM" id="601331"/>
    </disease>
    <text>Disease susceptibility is associated with variants affecting the gene represented in this entry.</text>
</comment>
<comment type="similarity">
    <text evidence="9">Belongs to the BicC family.</text>
</comment>
<comment type="sequence caution" evidence="9">
    <conflict type="erroneous initiation">
        <sequence resource="EMBL-CDS" id="BAB15369"/>
    </conflict>
</comment>
<reference key="1">
    <citation type="submission" date="2004-08" db="EMBL/GenBank/DDBJ databases">
        <title>Identification and complete sequencing of novel human transcripts through the use of mouse orthologs and testis cDNA sequences.</title>
        <authorList>
            <person name="Ferreira E.N."/>
            <person name="Pires L.C."/>
            <person name="Parmigiani R.B."/>
            <person name="Bettoni F."/>
            <person name="Puga R.D."/>
            <person name="Pinheiro D.G."/>
            <person name="Andrade L.E.C."/>
            <person name="Cruz L.O."/>
            <person name="Degaki T.L."/>
            <person name="Faria M. Jr."/>
            <person name="Festa F."/>
            <person name="Giannella-Neto D."/>
            <person name="Giorgi R.R."/>
            <person name="Goldman G.H."/>
            <person name="Granja F."/>
            <person name="Gruber A."/>
            <person name="Hackel C."/>
            <person name="Henrique-Silva F."/>
            <person name="Malnic B."/>
            <person name="Manzini C.V.B."/>
            <person name="Marie S.K.N."/>
            <person name="Martinez-Rossi N.M."/>
            <person name="Oba-Shinjo S.M."/>
            <person name="Pardini M.I.M.C."/>
            <person name="Rahal P."/>
            <person name="Rainho C.A."/>
            <person name="Rogatto S.R."/>
            <person name="Romano C.M."/>
            <person name="Rodrigues V."/>
            <person name="Sales M.M."/>
            <person name="Savoldi M."/>
            <person name="da Silva I.D.C.G."/>
            <person name="da Silva N.P."/>
            <person name="de Souza S.J."/>
            <person name="Tajara E.H."/>
            <person name="Silva W.A. Jr."/>
            <person name="Simpson A.J.G."/>
            <person name="Sogayar M.C."/>
            <person name="Camargo A.A."/>
            <person name="Carraro D.M."/>
        </authorList>
    </citation>
    <scope>NUCLEOTIDE SEQUENCE [MRNA] (ISOFORM 1)</scope>
</reference>
<reference key="2">
    <citation type="journal article" date="2004" name="Nat. Genet.">
        <title>Complete sequencing and characterization of 21,243 full-length human cDNAs.</title>
        <authorList>
            <person name="Ota T."/>
            <person name="Suzuki Y."/>
            <person name="Nishikawa T."/>
            <person name="Otsuki T."/>
            <person name="Sugiyama T."/>
            <person name="Irie R."/>
            <person name="Wakamatsu A."/>
            <person name="Hayashi K."/>
            <person name="Sato H."/>
            <person name="Nagai K."/>
            <person name="Kimura K."/>
            <person name="Makita H."/>
            <person name="Sekine M."/>
            <person name="Obayashi M."/>
            <person name="Nishi T."/>
            <person name="Shibahara T."/>
            <person name="Tanaka T."/>
            <person name="Ishii S."/>
            <person name="Yamamoto J."/>
            <person name="Saito K."/>
            <person name="Kawai Y."/>
            <person name="Isono Y."/>
            <person name="Nakamura Y."/>
            <person name="Nagahari K."/>
            <person name="Murakami K."/>
            <person name="Yasuda T."/>
            <person name="Iwayanagi T."/>
            <person name="Wagatsuma M."/>
            <person name="Shiratori A."/>
            <person name="Sudo H."/>
            <person name="Hosoiri T."/>
            <person name="Kaku Y."/>
            <person name="Kodaira H."/>
            <person name="Kondo H."/>
            <person name="Sugawara M."/>
            <person name="Takahashi M."/>
            <person name="Kanda K."/>
            <person name="Yokoi T."/>
            <person name="Furuya T."/>
            <person name="Kikkawa E."/>
            <person name="Omura Y."/>
            <person name="Abe K."/>
            <person name="Kamihara K."/>
            <person name="Katsuta N."/>
            <person name="Sato K."/>
            <person name="Tanikawa M."/>
            <person name="Yamazaki M."/>
            <person name="Ninomiya K."/>
            <person name="Ishibashi T."/>
            <person name="Yamashita H."/>
            <person name="Murakawa K."/>
            <person name="Fujimori K."/>
            <person name="Tanai H."/>
            <person name="Kimata M."/>
            <person name="Watanabe M."/>
            <person name="Hiraoka S."/>
            <person name="Chiba Y."/>
            <person name="Ishida S."/>
            <person name="Ono Y."/>
            <person name="Takiguchi S."/>
            <person name="Watanabe S."/>
            <person name="Yosida M."/>
            <person name="Hotuta T."/>
            <person name="Kusano J."/>
            <person name="Kanehori K."/>
            <person name="Takahashi-Fujii A."/>
            <person name="Hara H."/>
            <person name="Tanase T.-O."/>
            <person name="Nomura Y."/>
            <person name="Togiya S."/>
            <person name="Komai F."/>
            <person name="Hara R."/>
            <person name="Takeuchi K."/>
            <person name="Arita M."/>
            <person name="Imose N."/>
            <person name="Musashino K."/>
            <person name="Yuuki H."/>
            <person name="Oshima A."/>
            <person name="Sasaki N."/>
            <person name="Aotsuka S."/>
            <person name="Yoshikawa Y."/>
            <person name="Matsunawa H."/>
            <person name="Ichihara T."/>
            <person name="Shiohata N."/>
            <person name="Sano S."/>
            <person name="Moriya S."/>
            <person name="Momiyama H."/>
            <person name="Satoh N."/>
            <person name="Takami S."/>
            <person name="Terashima Y."/>
            <person name="Suzuki O."/>
            <person name="Nakagawa S."/>
            <person name="Senoh A."/>
            <person name="Mizoguchi H."/>
            <person name="Goto Y."/>
            <person name="Shimizu F."/>
            <person name="Wakebe H."/>
            <person name="Hishigaki H."/>
            <person name="Watanabe T."/>
            <person name="Sugiyama A."/>
            <person name="Takemoto M."/>
            <person name="Kawakami B."/>
            <person name="Yamazaki M."/>
            <person name="Watanabe K."/>
            <person name="Kumagai A."/>
            <person name="Itakura S."/>
            <person name="Fukuzumi Y."/>
            <person name="Fujimori Y."/>
            <person name="Komiyama M."/>
            <person name="Tashiro H."/>
            <person name="Tanigami A."/>
            <person name="Fujiwara T."/>
            <person name="Ono T."/>
            <person name="Yamada K."/>
            <person name="Fujii Y."/>
            <person name="Ozaki K."/>
            <person name="Hirao M."/>
            <person name="Ohmori Y."/>
            <person name="Kawabata A."/>
            <person name="Hikiji T."/>
            <person name="Kobatake N."/>
            <person name="Inagaki H."/>
            <person name="Ikema Y."/>
            <person name="Okamoto S."/>
            <person name="Okitani R."/>
            <person name="Kawakami T."/>
            <person name="Noguchi S."/>
            <person name="Itoh T."/>
            <person name="Shigeta K."/>
            <person name="Senba T."/>
            <person name="Matsumura K."/>
            <person name="Nakajima Y."/>
            <person name="Mizuno T."/>
            <person name="Morinaga M."/>
            <person name="Sasaki M."/>
            <person name="Togashi T."/>
            <person name="Oyama M."/>
            <person name="Hata H."/>
            <person name="Watanabe M."/>
            <person name="Komatsu T."/>
            <person name="Mizushima-Sugano J."/>
            <person name="Satoh T."/>
            <person name="Shirai Y."/>
            <person name="Takahashi Y."/>
            <person name="Nakagawa K."/>
            <person name="Okumura K."/>
            <person name="Nagase T."/>
            <person name="Nomura N."/>
            <person name="Kikuchi H."/>
            <person name="Masuho Y."/>
            <person name="Yamashita R."/>
            <person name="Nakai K."/>
            <person name="Yada T."/>
            <person name="Nakamura Y."/>
            <person name="Ohara O."/>
            <person name="Isogai T."/>
            <person name="Sugano S."/>
        </authorList>
    </citation>
    <scope>NUCLEOTIDE SEQUENCE [LARGE SCALE MRNA] OF 367-974 (ISOFORM 2)</scope>
</reference>
<reference key="3">
    <citation type="journal article" date="2006" name="Cell">
        <title>Global, in vivo, and site-specific phosphorylation dynamics in signaling networks.</title>
        <authorList>
            <person name="Olsen J.V."/>
            <person name="Blagoev B."/>
            <person name="Gnad F."/>
            <person name="Macek B."/>
            <person name="Kumar C."/>
            <person name="Mortensen P."/>
            <person name="Mann M."/>
        </authorList>
    </citation>
    <scope>IDENTIFICATION BY MASS SPECTROMETRY [LARGE SCALE ANALYSIS]</scope>
    <source>
        <tissue>Cervix carcinoma</tissue>
    </source>
</reference>
<reference key="4">
    <citation type="journal article" date="2009" name="Science">
        <title>Lysine acetylation targets protein complexes and co-regulates major cellular functions.</title>
        <authorList>
            <person name="Choudhary C."/>
            <person name="Kumar C."/>
            <person name="Gnad F."/>
            <person name="Nielsen M.L."/>
            <person name="Rehman M."/>
            <person name="Walther T.C."/>
            <person name="Olsen J.V."/>
            <person name="Mann M."/>
        </authorList>
    </citation>
    <scope>ACETYLATION [LARGE SCALE ANALYSIS] AT LYS-398</scope>
    <scope>IDENTIFICATION BY MASS SPECTROMETRY [LARGE SCALE ANALYSIS]</scope>
</reference>
<reference key="5">
    <citation type="journal article" date="2010" name="Sci. Signal.">
        <title>Quantitative phosphoproteomics reveals widespread full phosphorylation site occupancy during mitosis.</title>
        <authorList>
            <person name="Olsen J.V."/>
            <person name="Vermeulen M."/>
            <person name="Santamaria A."/>
            <person name="Kumar C."/>
            <person name="Miller M.L."/>
            <person name="Jensen L.J."/>
            <person name="Gnad F."/>
            <person name="Cox J."/>
            <person name="Jensen T.S."/>
            <person name="Nigg E.A."/>
            <person name="Brunak S."/>
            <person name="Mann M."/>
        </authorList>
    </citation>
    <scope>PHOSPHORYLATION [LARGE SCALE ANALYSIS] AT SER-576</scope>
    <scope>IDENTIFICATION BY MASS SPECTROMETRY [LARGE SCALE ANALYSIS]</scope>
    <source>
        <tissue>Cervix carcinoma</tissue>
    </source>
</reference>
<reference key="6">
    <citation type="journal article" date="2012" name="Hum. Mutat.">
        <title>Two mutations in human BICC1 resulting in Wnt pathway hyperactivity associated with cystic renal dysplasia.</title>
        <authorList>
            <person name="Kraus M.R."/>
            <person name="Clauin S."/>
            <person name="Pfister Y."/>
            <person name="Di Maio M."/>
            <person name="Ulinski T."/>
            <person name="Constam D."/>
            <person name="Bellanne-Chantelot C."/>
            <person name="Grapin-Botton A."/>
        </authorList>
    </citation>
    <scope>FUNCTION AS NEGATIVE REGULATOR OF WNT SIGNALING</scope>
    <scope>VARIANT CYSRD GLY-932</scope>
    <scope>VARIANT THR-711</scope>
    <scope>CHARACTERIZATION OF VARIANT CYSRD GLY-932</scope>
</reference>
<reference key="7">
    <citation type="journal article" date="2013" name="J. Proteome Res.">
        <title>Toward a comprehensive characterization of a human cancer cell phosphoproteome.</title>
        <authorList>
            <person name="Zhou H."/>
            <person name="Di Palma S."/>
            <person name="Preisinger C."/>
            <person name="Peng M."/>
            <person name="Polat A.N."/>
            <person name="Heck A.J."/>
            <person name="Mohammed S."/>
        </authorList>
    </citation>
    <scope>IDENTIFICATION BY MASS SPECTROMETRY [LARGE SCALE ANALYSIS]</scope>
    <source>
        <tissue>Cervix carcinoma</tissue>
    </source>
</reference>
<reference key="8">
    <citation type="journal article" date="2014" name="Hum. Mol. Genet.">
        <title>Exome sequencing identifies de novo gain of function missense mutation in KCND2 in identical twins with autism and seizures that slows potassium channel inactivation.</title>
        <authorList>
            <person name="Lee H."/>
            <person name="Lin M.C."/>
            <person name="Kornblum H.I."/>
            <person name="Papazian D.M."/>
            <person name="Nelson S.F."/>
        </authorList>
    </citation>
    <scope>VARIANT VAL-270</scope>
</reference>
<name>BICC1_HUMAN</name>
<keyword id="KW-0002">3D-structure</keyword>
<keyword id="KW-0007">Acetylation</keyword>
<keyword id="KW-0025">Alternative splicing</keyword>
<keyword id="KW-0963">Cytoplasm</keyword>
<keyword id="KW-0217">Developmental protein</keyword>
<keyword id="KW-0225">Disease variant</keyword>
<keyword id="KW-0597">Phosphoprotein</keyword>
<keyword id="KW-1267">Proteomics identification</keyword>
<keyword id="KW-1185">Reference proteome</keyword>
<keyword id="KW-0677">Repeat</keyword>
<keyword id="KW-0694">RNA-binding</keyword>
<protein>
    <recommendedName>
        <fullName>Protein bicaudal C homolog 1</fullName>
        <shortName>Bic-C</shortName>
    </recommendedName>
</protein>
<organism>
    <name type="scientific">Homo sapiens</name>
    <name type="common">Human</name>
    <dbReference type="NCBI Taxonomy" id="9606"/>
    <lineage>
        <taxon>Eukaryota</taxon>
        <taxon>Metazoa</taxon>
        <taxon>Chordata</taxon>
        <taxon>Craniata</taxon>
        <taxon>Vertebrata</taxon>
        <taxon>Euteleostomi</taxon>
        <taxon>Mammalia</taxon>
        <taxon>Eutheria</taxon>
        <taxon>Euarchontoglires</taxon>
        <taxon>Primates</taxon>
        <taxon>Haplorrhini</taxon>
        <taxon>Catarrhini</taxon>
        <taxon>Hominidae</taxon>
        <taxon>Homo</taxon>
    </lineage>
</organism>
<evidence type="ECO:0000250" key="1"/>
<evidence type="ECO:0000250" key="2">
    <source>
        <dbReference type="UniProtKB" id="Q99MQ1"/>
    </source>
</evidence>
<evidence type="ECO:0000255" key="3">
    <source>
        <dbReference type="PROSITE-ProRule" id="PRU00117"/>
    </source>
</evidence>
<evidence type="ECO:0000255" key="4">
    <source>
        <dbReference type="PROSITE-ProRule" id="PRU00184"/>
    </source>
</evidence>
<evidence type="ECO:0000256" key="5">
    <source>
        <dbReference type="SAM" id="MobiDB-lite"/>
    </source>
</evidence>
<evidence type="ECO:0000269" key="6">
    <source>
    </source>
</evidence>
<evidence type="ECO:0000269" key="7">
    <source>
    </source>
</evidence>
<evidence type="ECO:0000303" key="8">
    <source>
    </source>
</evidence>
<evidence type="ECO:0000305" key="9"/>
<evidence type="ECO:0007744" key="10">
    <source>
    </source>
</evidence>
<evidence type="ECO:0007744" key="11">
    <source>
    </source>
</evidence>
<evidence type="ECO:0007829" key="12">
    <source>
        <dbReference type="PDB" id="4RQM"/>
    </source>
</evidence>
<evidence type="ECO:0007829" key="13">
    <source>
        <dbReference type="PDB" id="6GY4"/>
    </source>
</evidence>
<dbReference type="EMBL" id="AY726586">
    <property type="status" value="NOT_ANNOTATED_CDS"/>
    <property type="molecule type" value="mRNA"/>
</dbReference>
<dbReference type="EMBL" id="AK026129">
    <property type="protein sequence ID" value="BAB15369.1"/>
    <property type="status" value="ALT_INIT"/>
    <property type="molecule type" value="mRNA"/>
</dbReference>
<dbReference type="CCDS" id="CCDS31206.1">
    <molecule id="Q9H694-1"/>
</dbReference>
<dbReference type="RefSeq" id="NP_001073981.1">
    <molecule id="Q9H694-1"/>
    <property type="nucleotide sequence ID" value="NM_001080512.3"/>
</dbReference>
<dbReference type="PDB" id="4RQM">
    <property type="method" value="X-ray"/>
    <property type="resolution" value="1.75 A"/>
    <property type="chains" value="A/B/C=870-939"/>
</dbReference>
<dbReference type="PDB" id="4RQN">
    <property type="method" value="X-ray"/>
    <property type="resolution" value="2.00 A"/>
    <property type="chains" value="A/B/C=870-939"/>
</dbReference>
<dbReference type="PDB" id="6GY4">
    <property type="method" value="X-ray"/>
    <property type="resolution" value="1.99 A"/>
    <property type="chains" value="A/B/C/D=47-130"/>
</dbReference>
<dbReference type="PDBsum" id="4RQM"/>
<dbReference type="PDBsum" id="4RQN"/>
<dbReference type="PDBsum" id="6GY4"/>
<dbReference type="SMR" id="Q9H694"/>
<dbReference type="BioGRID" id="123119">
    <property type="interactions" value="34"/>
</dbReference>
<dbReference type="FunCoup" id="Q9H694">
    <property type="interactions" value="761"/>
</dbReference>
<dbReference type="IntAct" id="Q9H694">
    <property type="interactions" value="12"/>
</dbReference>
<dbReference type="MINT" id="Q9H694"/>
<dbReference type="STRING" id="9606.ENSP00000362993"/>
<dbReference type="GlyGen" id="Q9H694">
    <property type="glycosylation" value="3 sites, 1 O-linked glycan (2 sites)"/>
</dbReference>
<dbReference type="iPTMnet" id="Q9H694"/>
<dbReference type="PhosphoSitePlus" id="Q9H694"/>
<dbReference type="BioMuta" id="BICC1"/>
<dbReference type="DMDM" id="119367815"/>
<dbReference type="jPOST" id="Q9H694"/>
<dbReference type="MassIVE" id="Q9H694"/>
<dbReference type="PaxDb" id="9606-ENSP00000362993"/>
<dbReference type="PeptideAtlas" id="Q9H694"/>
<dbReference type="ProteomicsDB" id="80965">
    <molecule id="Q9H694-1"/>
</dbReference>
<dbReference type="ProteomicsDB" id="80966">
    <molecule id="Q9H694-2"/>
</dbReference>
<dbReference type="Pumba" id="Q9H694"/>
<dbReference type="Antibodypedia" id="51885">
    <property type="antibodies" value="160 antibodies from 25 providers"/>
</dbReference>
<dbReference type="DNASU" id="80114"/>
<dbReference type="Ensembl" id="ENST00000373886.8">
    <molecule id="Q9H694-1"/>
    <property type="protein sequence ID" value="ENSP00000362993.3"/>
    <property type="gene ID" value="ENSG00000122870.12"/>
</dbReference>
<dbReference type="GeneID" id="80114"/>
<dbReference type="KEGG" id="hsa:80114"/>
<dbReference type="MANE-Select" id="ENST00000373886.8">
    <property type="protein sequence ID" value="ENSP00000362993.3"/>
    <property type="RefSeq nucleotide sequence ID" value="NM_001080512.3"/>
    <property type="RefSeq protein sequence ID" value="NP_001073981.1"/>
</dbReference>
<dbReference type="UCSC" id="uc001jki.2">
    <molecule id="Q9H694-1"/>
    <property type="organism name" value="human"/>
</dbReference>
<dbReference type="AGR" id="HGNC:19351"/>
<dbReference type="CTD" id="80114"/>
<dbReference type="DisGeNET" id="80114"/>
<dbReference type="GeneCards" id="BICC1"/>
<dbReference type="HGNC" id="HGNC:19351">
    <property type="gene designation" value="BICC1"/>
</dbReference>
<dbReference type="HPA" id="ENSG00000122870">
    <property type="expression patterns" value="Tissue enhanced (kidney)"/>
</dbReference>
<dbReference type="MalaCards" id="BICC1"/>
<dbReference type="MIM" id="601331">
    <property type="type" value="phenotype"/>
</dbReference>
<dbReference type="MIM" id="614295">
    <property type="type" value="gene"/>
</dbReference>
<dbReference type="neXtProt" id="NX_Q9H694"/>
<dbReference type="OpenTargets" id="ENSG00000122870"/>
<dbReference type="Orphanet" id="730">
    <property type="disease" value="Autosomal dominant polycystic kidney disease"/>
</dbReference>
<dbReference type="PharmGKB" id="PA134878124"/>
<dbReference type="VEuPathDB" id="HostDB:ENSG00000122870"/>
<dbReference type="eggNOG" id="KOG2208">
    <property type="taxonomic scope" value="Eukaryota"/>
</dbReference>
<dbReference type="eggNOG" id="KOG4374">
    <property type="taxonomic scope" value="Eukaryota"/>
</dbReference>
<dbReference type="GeneTree" id="ENSGT00940000156276"/>
<dbReference type="HOGENOM" id="CLU_008040_0_0_1"/>
<dbReference type="InParanoid" id="Q9H694"/>
<dbReference type="OMA" id="LMYPTAA"/>
<dbReference type="OrthoDB" id="271862at2759"/>
<dbReference type="PAN-GO" id="Q9H694">
    <property type="GO annotations" value="1 GO annotation based on evolutionary models"/>
</dbReference>
<dbReference type="PhylomeDB" id="Q9H694"/>
<dbReference type="TreeFam" id="TF323767"/>
<dbReference type="PathwayCommons" id="Q9H694"/>
<dbReference type="SignaLink" id="Q9H694"/>
<dbReference type="BioGRID-ORCS" id="80114">
    <property type="hits" value="6 hits in 1150 CRISPR screens"/>
</dbReference>
<dbReference type="CD-CODE" id="232F8A39">
    <property type="entry name" value="P-body"/>
</dbReference>
<dbReference type="CD-CODE" id="DEE660B4">
    <property type="entry name" value="Stress granule"/>
</dbReference>
<dbReference type="ChiTaRS" id="BICC1">
    <property type="organism name" value="human"/>
</dbReference>
<dbReference type="EvolutionaryTrace" id="Q9H694"/>
<dbReference type="GenomeRNAi" id="80114"/>
<dbReference type="Pharos" id="Q9H694">
    <property type="development level" value="Tbio"/>
</dbReference>
<dbReference type="PRO" id="PR:Q9H694"/>
<dbReference type="Proteomes" id="UP000005640">
    <property type="component" value="Chromosome 10"/>
</dbReference>
<dbReference type="RNAct" id="Q9H694">
    <property type="molecule type" value="protein"/>
</dbReference>
<dbReference type="Bgee" id="ENSG00000122870">
    <property type="expression patterns" value="Expressed in germinal epithelium of ovary and 158 other cell types or tissues"/>
</dbReference>
<dbReference type="ExpressionAtlas" id="Q9H694">
    <property type="expression patterns" value="baseline and differential"/>
</dbReference>
<dbReference type="GO" id="GO:0005737">
    <property type="term" value="C:cytoplasm"/>
    <property type="evidence" value="ECO:0000318"/>
    <property type="project" value="GO_Central"/>
</dbReference>
<dbReference type="GO" id="GO:0003723">
    <property type="term" value="F:RNA binding"/>
    <property type="evidence" value="ECO:0007005"/>
    <property type="project" value="UniProtKB"/>
</dbReference>
<dbReference type="GO" id="GO:0007368">
    <property type="term" value="P:determination of left/right symmetry"/>
    <property type="evidence" value="ECO:0007669"/>
    <property type="project" value="Ensembl"/>
</dbReference>
<dbReference type="GO" id="GO:0007507">
    <property type="term" value="P:heart development"/>
    <property type="evidence" value="ECO:0007669"/>
    <property type="project" value="Ensembl"/>
</dbReference>
<dbReference type="GO" id="GO:0001822">
    <property type="term" value="P:kidney development"/>
    <property type="evidence" value="ECO:0007669"/>
    <property type="project" value="Ensembl"/>
</dbReference>
<dbReference type="GO" id="GO:0090090">
    <property type="term" value="P:negative regulation of canonical Wnt signaling pathway"/>
    <property type="evidence" value="ECO:0000314"/>
    <property type="project" value="UniProtKB"/>
</dbReference>
<dbReference type="CDD" id="cd22420">
    <property type="entry name" value="KH-I_BICC1_rpt1"/>
    <property type="match status" value="1"/>
</dbReference>
<dbReference type="CDD" id="cd22421">
    <property type="entry name" value="KH-I_BICC1_rpt2"/>
    <property type="match status" value="1"/>
</dbReference>
<dbReference type="CDD" id="cd22422">
    <property type="entry name" value="KH-I_BICC1_rpt3"/>
    <property type="match status" value="1"/>
</dbReference>
<dbReference type="CDD" id="cd09520">
    <property type="entry name" value="SAM_BICC1"/>
    <property type="match status" value="1"/>
</dbReference>
<dbReference type="FunFam" id="1.10.150.50:FF:000025">
    <property type="entry name" value="Ankyrin repeat and sterile alpha motif domain-containing 6"/>
    <property type="match status" value="1"/>
</dbReference>
<dbReference type="FunFam" id="3.30.310.270:FF:000001">
    <property type="entry name" value="BicC family RNA binding protein 1"/>
    <property type="match status" value="1"/>
</dbReference>
<dbReference type="FunFam" id="3.30.310.270:FF:000002">
    <property type="entry name" value="BicC family RNA binding protein 1"/>
    <property type="match status" value="1"/>
</dbReference>
<dbReference type="FunFam" id="3.30.1370.10:FF:000064">
    <property type="entry name" value="protein bicaudal C homolog 1 isoform X1"/>
    <property type="match status" value="1"/>
</dbReference>
<dbReference type="Gene3D" id="3.30.310.270">
    <property type="match status" value="2"/>
</dbReference>
<dbReference type="Gene3D" id="3.30.1370.10">
    <property type="entry name" value="K Homology domain, type 1"/>
    <property type="match status" value="1"/>
</dbReference>
<dbReference type="Gene3D" id="1.10.150.50">
    <property type="entry name" value="Transcription Factor, Ets-1"/>
    <property type="match status" value="1"/>
</dbReference>
<dbReference type="InterPro" id="IPR054727">
    <property type="entry name" value="BICC1_KH"/>
</dbReference>
<dbReference type="InterPro" id="IPR047549">
    <property type="entry name" value="BICC1_KH-I_rpt1"/>
</dbReference>
<dbReference type="InterPro" id="IPR047554">
    <property type="entry name" value="BICC1_KH-I_rpt2"/>
</dbReference>
<dbReference type="InterPro" id="IPR047553">
    <property type="entry name" value="BICC1_KH-I_rpt3"/>
</dbReference>
<dbReference type="InterPro" id="IPR037974">
    <property type="entry name" value="BICC1_SAM_dom"/>
</dbReference>
<dbReference type="InterPro" id="IPR004087">
    <property type="entry name" value="KH_dom"/>
</dbReference>
<dbReference type="InterPro" id="IPR004088">
    <property type="entry name" value="KH_dom_type_1"/>
</dbReference>
<dbReference type="InterPro" id="IPR036612">
    <property type="entry name" value="KH_dom_type_1_sf"/>
</dbReference>
<dbReference type="InterPro" id="IPR001660">
    <property type="entry name" value="SAM"/>
</dbReference>
<dbReference type="InterPro" id="IPR013761">
    <property type="entry name" value="SAM/pointed_sf"/>
</dbReference>
<dbReference type="PANTHER" id="PTHR10627:SF78">
    <property type="entry name" value="PROTEIN BICAUDAL C HOMOLOG 1"/>
    <property type="match status" value="1"/>
</dbReference>
<dbReference type="PANTHER" id="PTHR10627">
    <property type="entry name" value="SCP160"/>
    <property type="match status" value="1"/>
</dbReference>
<dbReference type="Pfam" id="PF00013">
    <property type="entry name" value="KH_1"/>
    <property type="match status" value="2"/>
</dbReference>
<dbReference type="Pfam" id="PF22985">
    <property type="entry name" value="KH_BICC1"/>
    <property type="match status" value="2"/>
</dbReference>
<dbReference type="Pfam" id="PF24234">
    <property type="entry name" value="KH_BICC1_1st"/>
    <property type="match status" value="1"/>
</dbReference>
<dbReference type="Pfam" id="PF00536">
    <property type="entry name" value="SAM_1"/>
    <property type="match status" value="1"/>
</dbReference>
<dbReference type="SMART" id="SM00322">
    <property type="entry name" value="KH"/>
    <property type="match status" value="3"/>
</dbReference>
<dbReference type="SMART" id="SM00454">
    <property type="entry name" value="SAM"/>
    <property type="match status" value="1"/>
</dbReference>
<dbReference type="SUPFAM" id="SSF54791">
    <property type="entry name" value="Eukaryotic type KH-domain (KH-domain type I)"/>
    <property type="match status" value="3"/>
</dbReference>
<dbReference type="SUPFAM" id="SSF47769">
    <property type="entry name" value="SAM/Pointed domain"/>
    <property type="match status" value="1"/>
</dbReference>
<dbReference type="PROSITE" id="PS50084">
    <property type="entry name" value="KH_TYPE_1"/>
    <property type="match status" value="2"/>
</dbReference>
<dbReference type="PROSITE" id="PS50105">
    <property type="entry name" value="SAM_DOMAIN"/>
    <property type="match status" value="1"/>
</dbReference>
<proteinExistence type="evidence at protein level"/>
<accession>Q9H694</accession>
<gene>
    <name type="primary">BICC1</name>
</gene>